<geneLocation type="chloroplast"/>
<accession>P84582</accession>
<gene>
    <name type="primary">atpA</name>
</gene>
<reference key="1">
    <citation type="thesis" date="2006" institute="ICAT-FCUL" country="Portugal">
        <title>Molecular analysis of Populus euphratica Oliv. response to moderate heat stress.</title>
        <authorList>
            <person name="Ferreira S."/>
        </authorList>
    </citation>
    <scope>PROTEIN SEQUENCE OF 1-67 AND 75-98</scope>
    <source>
        <tissue>Leaf</tissue>
    </source>
</reference>
<reference key="2">
    <citation type="journal article" date="2006" name="Ann. Bot.">
        <title>Proteome profiling of Populus euphratica Oliv. upon heat stress.</title>
        <authorList>
            <person name="Ferreira S."/>
            <person name="Hjernoe K."/>
            <person name="Larsen M."/>
            <person name="Wingsle G."/>
            <person name="Larsen P."/>
            <person name="Fey S."/>
            <person name="Roepstorff P."/>
            <person name="Pais M.S."/>
        </authorList>
    </citation>
    <scope>PROTEIN SEQUENCE OF 17-53 AND 68-85</scope>
    <source>
        <tissue>Leaf</tissue>
    </source>
</reference>
<keyword id="KW-0066">ATP synthesis</keyword>
<keyword id="KW-0067">ATP-binding</keyword>
<keyword id="KW-0139">CF(1)</keyword>
<keyword id="KW-0150">Chloroplast</keyword>
<keyword id="KW-0903">Direct protein sequencing</keyword>
<keyword id="KW-0375">Hydrogen ion transport</keyword>
<keyword id="KW-0406">Ion transport</keyword>
<keyword id="KW-0472">Membrane</keyword>
<keyword id="KW-0547">Nucleotide-binding</keyword>
<keyword id="KW-0934">Plastid</keyword>
<keyword id="KW-1185">Reference proteome</keyword>
<keyword id="KW-0793">Thylakoid</keyword>
<keyword id="KW-1278">Translocase</keyword>
<keyword id="KW-0813">Transport</keyword>
<dbReference type="EC" id="7.1.2.2"/>
<dbReference type="SMR" id="P84582"/>
<dbReference type="Proteomes" id="UP000694918">
    <property type="component" value="Unplaced"/>
</dbReference>
<dbReference type="GO" id="GO:0009535">
    <property type="term" value="C:chloroplast thylakoid membrane"/>
    <property type="evidence" value="ECO:0007669"/>
    <property type="project" value="UniProtKB-SubCell"/>
</dbReference>
<dbReference type="GO" id="GO:0045259">
    <property type="term" value="C:proton-transporting ATP synthase complex"/>
    <property type="evidence" value="ECO:0007669"/>
    <property type="project" value="UniProtKB-KW"/>
</dbReference>
<dbReference type="GO" id="GO:0005524">
    <property type="term" value="F:ATP binding"/>
    <property type="evidence" value="ECO:0007669"/>
    <property type="project" value="UniProtKB-KW"/>
</dbReference>
<dbReference type="GO" id="GO:0006754">
    <property type="term" value="P:ATP biosynthetic process"/>
    <property type="evidence" value="ECO:0007669"/>
    <property type="project" value="UniProtKB-KW"/>
</dbReference>
<dbReference type="GO" id="GO:1902600">
    <property type="term" value="P:proton transmembrane transport"/>
    <property type="evidence" value="ECO:0007669"/>
    <property type="project" value="UniProtKB-KW"/>
</dbReference>
<dbReference type="Gene3D" id="3.40.50.12240">
    <property type="match status" value="1"/>
</dbReference>
<evidence type="ECO:0000250" key="1"/>
<evidence type="ECO:0000255" key="2">
    <source>
        <dbReference type="PROSITE-ProRule" id="PRU10106"/>
    </source>
</evidence>
<evidence type="ECO:0000305" key="3"/>
<proteinExistence type="evidence at protein level"/>
<name>ATPA_POPEU</name>
<sequence length="98" mass="10621">IVNTGTVLQVGDGIARIAQIPVSEAYLGRVINALAKPIDGRLIESPAPGIISRASSVAQVVNALQERKFLVELRTQFQEIISSTKLRNQADQTITLIR</sequence>
<protein>
    <recommendedName>
        <fullName>ATP synthase subunit alpha, chloroplastic</fullName>
        <ecNumber>7.1.2.2</ecNumber>
    </recommendedName>
    <alternativeName>
        <fullName>ATP synthase F1 sector subunit alpha</fullName>
    </alternativeName>
    <alternativeName>
        <fullName>F-ATPase subunit alpha</fullName>
    </alternativeName>
</protein>
<organism>
    <name type="scientific">Populus euphratica</name>
    <name type="common">Euphrates poplar</name>
    <dbReference type="NCBI Taxonomy" id="75702"/>
    <lineage>
        <taxon>Eukaryota</taxon>
        <taxon>Viridiplantae</taxon>
        <taxon>Streptophyta</taxon>
        <taxon>Embryophyta</taxon>
        <taxon>Tracheophyta</taxon>
        <taxon>Spermatophyta</taxon>
        <taxon>Magnoliopsida</taxon>
        <taxon>eudicotyledons</taxon>
        <taxon>Gunneridae</taxon>
        <taxon>Pentapetalae</taxon>
        <taxon>rosids</taxon>
        <taxon>fabids</taxon>
        <taxon>Malpighiales</taxon>
        <taxon>Salicaceae</taxon>
        <taxon>Saliceae</taxon>
        <taxon>Populus</taxon>
    </lineage>
</organism>
<feature type="chain" id="PRO_0000144390" description="ATP synthase subunit alpha, chloroplastic">
    <location>
        <begin position="1" status="less than"/>
        <end position="98" status="greater than"/>
    </location>
</feature>
<feature type="non-consecutive residues" evidence="3">
    <location>
        <begin position="16"/>
        <end position="17"/>
    </location>
</feature>
<feature type="non-consecutive residues" evidence="3">
    <location>
        <begin position="29"/>
        <end position="30"/>
    </location>
</feature>
<feature type="non-consecutive residues" evidence="3">
    <location>
        <begin position="41"/>
        <end position="42"/>
    </location>
</feature>
<feature type="non-consecutive residues" evidence="3">
    <location>
        <begin position="53"/>
        <end position="54"/>
    </location>
</feature>
<feature type="non-consecutive residues" evidence="3">
    <location>
        <begin position="67"/>
        <end position="68"/>
    </location>
</feature>
<feature type="non-consecutive residues" evidence="3">
    <location>
        <begin position="74"/>
        <end position="75"/>
    </location>
</feature>
<feature type="non-consecutive residues" evidence="3">
    <location>
        <begin position="85"/>
        <end position="86"/>
    </location>
</feature>
<feature type="non-terminal residue">
    <location>
        <position position="1"/>
    </location>
</feature>
<feature type="non-terminal residue">
    <location>
        <position position="98"/>
    </location>
</feature>
<comment type="function">
    <text>Produces ATP from ADP in the presence of a proton gradient across the membrane. The alpha chain is a regulatory subunit.</text>
</comment>
<comment type="catalytic activity">
    <reaction evidence="2">
        <text>ATP + H2O + 4 H(+)(in) = ADP + phosphate + 5 H(+)(out)</text>
        <dbReference type="Rhea" id="RHEA:57720"/>
        <dbReference type="ChEBI" id="CHEBI:15377"/>
        <dbReference type="ChEBI" id="CHEBI:15378"/>
        <dbReference type="ChEBI" id="CHEBI:30616"/>
        <dbReference type="ChEBI" id="CHEBI:43474"/>
        <dbReference type="ChEBI" id="CHEBI:456216"/>
        <dbReference type="EC" id="7.1.2.2"/>
    </reaction>
</comment>
<comment type="subunit">
    <text evidence="1">F-type ATPases have 2 components, CF(1) - the catalytic core - and CF(0) - the membrane proton channel. CF(1) has five subunits: alpha(3), beta(3), gamma(1), delta(1), epsilon(1). CF(0) has four main subunits: a, b, b' and c (By similarity).</text>
</comment>
<comment type="subcellular location">
    <subcellularLocation>
        <location evidence="1">Plastid</location>
        <location evidence="1">Chloroplast thylakoid membrane</location>
        <topology evidence="1">Peripheral membrane protein</topology>
    </subcellularLocation>
</comment>
<comment type="similarity">
    <text evidence="3">Belongs to the ATPase alpha/beta chains family.</text>
</comment>
<comment type="caution">
    <text evidence="3">The order of the peptides shown is unknown.</text>
</comment>